<dbReference type="EC" id="2.5.1.6" evidence="1"/>
<dbReference type="EMBL" id="CP000492">
    <property type="protein sequence ID" value="ABL64970.1"/>
    <property type="molecule type" value="Genomic_DNA"/>
</dbReference>
<dbReference type="RefSeq" id="WP_011744797.1">
    <property type="nucleotide sequence ID" value="NC_008639.1"/>
</dbReference>
<dbReference type="SMR" id="A1BEZ3"/>
<dbReference type="STRING" id="290317.Cpha266_0922"/>
<dbReference type="KEGG" id="cph:Cpha266_0922"/>
<dbReference type="eggNOG" id="COG0192">
    <property type="taxonomic scope" value="Bacteria"/>
</dbReference>
<dbReference type="HOGENOM" id="CLU_041802_1_1_10"/>
<dbReference type="OrthoDB" id="9801686at2"/>
<dbReference type="UniPathway" id="UPA00315">
    <property type="reaction ID" value="UER00080"/>
</dbReference>
<dbReference type="Proteomes" id="UP000008701">
    <property type="component" value="Chromosome"/>
</dbReference>
<dbReference type="GO" id="GO:0005737">
    <property type="term" value="C:cytoplasm"/>
    <property type="evidence" value="ECO:0007669"/>
    <property type="project" value="UniProtKB-SubCell"/>
</dbReference>
<dbReference type="GO" id="GO:0005524">
    <property type="term" value="F:ATP binding"/>
    <property type="evidence" value="ECO:0007669"/>
    <property type="project" value="UniProtKB-UniRule"/>
</dbReference>
<dbReference type="GO" id="GO:0000287">
    <property type="term" value="F:magnesium ion binding"/>
    <property type="evidence" value="ECO:0007669"/>
    <property type="project" value="UniProtKB-UniRule"/>
</dbReference>
<dbReference type="GO" id="GO:0004478">
    <property type="term" value="F:methionine adenosyltransferase activity"/>
    <property type="evidence" value="ECO:0007669"/>
    <property type="project" value="UniProtKB-UniRule"/>
</dbReference>
<dbReference type="GO" id="GO:0006730">
    <property type="term" value="P:one-carbon metabolic process"/>
    <property type="evidence" value="ECO:0007669"/>
    <property type="project" value="UniProtKB-KW"/>
</dbReference>
<dbReference type="GO" id="GO:0006556">
    <property type="term" value="P:S-adenosylmethionine biosynthetic process"/>
    <property type="evidence" value="ECO:0007669"/>
    <property type="project" value="UniProtKB-UniRule"/>
</dbReference>
<dbReference type="CDD" id="cd18079">
    <property type="entry name" value="S-AdoMet_synt"/>
    <property type="match status" value="1"/>
</dbReference>
<dbReference type="FunFam" id="3.30.300.10:FF:000003">
    <property type="entry name" value="S-adenosylmethionine synthase"/>
    <property type="match status" value="1"/>
</dbReference>
<dbReference type="Gene3D" id="3.30.300.10">
    <property type="match status" value="3"/>
</dbReference>
<dbReference type="HAMAP" id="MF_00086">
    <property type="entry name" value="S_AdoMet_synth1"/>
    <property type="match status" value="1"/>
</dbReference>
<dbReference type="InterPro" id="IPR022631">
    <property type="entry name" value="ADOMET_SYNTHASE_CS"/>
</dbReference>
<dbReference type="InterPro" id="IPR022630">
    <property type="entry name" value="S-AdoMet_synt_C"/>
</dbReference>
<dbReference type="InterPro" id="IPR022629">
    <property type="entry name" value="S-AdoMet_synt_central"/>
</dbReference>
<dbReference type="InterPro" id="IPR022628">
    <property type="entry name" value="S-AdoMet_synt_N"/>
</dbReference>
<dbReference type="InterPro" id="IPR002133">
    <property type="entry name" value="S-AdoMet_synthetase"/>
</dbReference>
<dbReference type="InterPro" id="IPR022636">
    <property type="entry name" value="S-AdoMet_synthetase_sfam"/>
</dbReference>
<dbReference type="NCBIfam" id="TIGR01034">
    <property type="entry name" value="metK"/>
    <property type="match status" value="1"/>
</dbReference>
<dbReference type="PANTHER" id="PTHR11964">
    <property type="entry name" value="S-ADENOSYLMETHIONINE SYNTHETASE"/>
    <property type="match status" value="1"/>
</dbReference>
<dbReference type="Pfam" id="PF02773">
    <property type="entry name" value="S-AdoMet_synt_C"/>
    <property type="match status" value="1"/>
</dbReference>
<dbReference type="Pfam" id="PF02772">
    <property type="entry name" value="S-AdoMet_synt_M"/>
    <property type="match status" value="1"/>
</dbReference>
<dbReference type="Pfam" id="PF00438">
    <property type="entry name" value="S-AdoMet_synt_N"/>
    <property type="match status" value="1"/>
</dbReference>
<dbReference type="PIRSF" id="PIRSF000497">
    <property type="entry name" value="MAT"/>
    <property type="match status" value="1"/>
</dbReference>
<dbReference type="SUPFAM" id="SSF55973">
    <property type="entry name" value="S-adenosylmethionine synthetase"/>
    <property type="match status" value="3"/>
</dbReference>
<dbReference type="PROSITE" id="PS00376">
    <property type="entry name" value="ADOMET_SYNTHASE_1"/>
    <property type="match status" value="1"/>
</dbReference>
<dbReference type="PROSITE" id="PS00377">
    <property type="entry name" value="ADOMET_SYNTHASE_2"/>
    <property type="match status" value="1"/>
</dbReference>
<keyword id="KW-0067">ATP-binding</keyword>
<keyword id="KW-0963">Cytoplasm</keyword>
<keyword id="KW-0460">Magnesium</keyword>
<keyword id="KW-0479">Metal-binding</keyword>
<keyword id="KW-0547">Nucleotide-binding</keyword>
<keyword id="KW-0554">One-carbon metabolism</keyword>
<keyword id="KW-0630">Potassium</keyword>
<keyword id="KW-1185">Reference proteome</keyword>
<keyword id="KW-0808">Transferase</keyword>
<proteinExistence type="inferred from homology"/>
<reference key="1">
    <citation type="submission" date="2006-12" db="EMBL/GenBank/DDBJ databases">
        <title>Complete sequence of Chlorobium phaeobacteroides DSM 266.</title>
        <authorList>
            <consortium name="US DOE Joint Genome Institute"/>
            <person name="Copeland A."/>
            <person name="Lucas S."/>
            <person name="Lapidus A."/>
            <person name="Barry K."/>
            <person name="Detter J.C."/>
            <person name="Glavina del Rio T."/>
            <person name="Hammon N."/>
            <person name="Israni S."/>
            <person name="Pitluck S."/>
            <person name="Goltsman E."/>
            <person name="Schmutz J."/>
            <person name="Larimer F."/>
            <person name="Land M."/>
            <person name="Hauser L."/>
            <person name="Mikhailova N."/>
            <person name="Li T."/>
            <person name="Overmann J."/>
            <person name="Bryant D.A."/>
            <person name="Richardson P."/>
        </authorList>
    </citation>
    <scope>NUCLEOTIDE SEQUENCE [LARGE SCALE GENOMIC DNA]</scope>
    <source>
        <strain>DSM 266 / SMG 266 / 2430</strain>
    </source>
</reference>
<organism>
    <name type="scientific">Chlorobium phaeobacteroides (strain DSM 266 / SMG 266 / 2430)</name>
    <dbReference type="NCBI Taxonomy" id="290317"/>
    <lineage>
        <taxon>Bacteria</taxon>
        <taxon>Pseudomonadati</taxon>
        <taxon>Chlorobiota</taxon>
        <taxon>Chlorobiia</taxon>
        <taxon>Chlorobiales</taxon>
        <taxon>Chlorobiaceae</taxon>
        <taxon>Chlorobium/Pelodictyon group</taxon>
        <taxon>Chlorobium</taxon>
    </lineage>
</organism>
<evidence type="ECO:0000255" key="1">
    <source>
        <dbReference type="HAMAP-Rule" id="MF_00086"/>
    </source>
</evidence>
<evidence type="ECO:0000256" key="2">
    <source>
        <dbReference type="SAM" id="MobiDB-lite"/>
    </source>
</evidence>
<accession>A1BEZ3</accession>
<name>METK_CHLPD</name>
<protein>
    <recommendedName>
        <fullName evidence="1">S-adenosylmethionine synthase</fullName>
        <shortName evidence="1">AdoMet synthase</shortName>
        <ecNumber evidence="1">2.5.1.6</ecNumber>
    </recommendedName>
    <alternativeName>
        <fullName evidence="1">MAT</fullName>
    </alternativeName>
    <alternativeName>
        <fullName evidence="1">Methionine adenosyltransferase</fullName>
    </alternativeName>
</protein>
<feature type="chain" id="PRO_0000302903" description="S-adenosylmethionine synthase">
    <location>
        <begin position="1"/>
        <end position="404"/>
    </location>
</feature>
<feature type="region of interest" description="Disordered" evidence="2">
    <location>
        <begin position="1"/>
        <end position="21"/>
    </location>
</feature>
<feature type="region of interest" description="Flexible loop" evidence="1">
    <location>
        <begin position="101"/>
        <end position="111"/>
    </location>
</feature>
<feature type="compositionally biased region" description="Polar residues" evidence="2">
    <location>
        <begin position="1"/>
        <end position="13"/>
    </location>
</feature>
<feature type="binding site" description="in other chain" evidence="1">
    <location>
        <position position="17"/>
    </location>
    <ligand>
        <name>ATP</name>
        <dbReference type="ChEBI" id="CHEBI:30616"/>
        <note>ligand shared between two neighboring subunits</note>
    </ligand>
</feature>
<feature type="binding site" evidence="1">
    <location>
        <position position="19"/>
    </location>
    <ligand>
        <name>Mg(2+)</name>
        <dbReference type="ChEBI" id="CHEBI:18420"/>
    </ligand>
</feature>
<feature type="binding site" evidence="1">
    <location>
        <position position="45"/>
    </location>
    <ligand>
        <name>K(+)</name>
        <dbReference type="ChEBI" id="CHEBI:29103"/>
    </ligand>
</feature>
<feature type="binding site" description="in other chain" evidence="1">
    <location>
        <position position="58"/>
    </location>
    <ligand>
        <name>L-methionine</name>
        <dbReference type="ChEBI" id="CHEBI:57844"/>
        <note>ligand shared between two neighboring subunits</note>
    </ligand>
</feature>
<feature type="binding site" description="in other chain" evidence="1">
    <location>
        <position position="101"/>
    </location>
    <ligand>
        <name>L-methionine</name>
        <dbReference type="ChEBI" id="CHEBI:57844"/>
        <note>ligand shared between two neighboring subunits</note>
    </ligand>
</feature>
<feature type="binding site" description="in other chain" evidence="1">
    <location>
        <begin position="172"/>
        <end position="174"/>
    </location>
    <ligand>
        <name>ATP</name>
        <dbReference type="ChEBI" id="CHEBI:30616"/>
        <note>ligand shared between two neighboring subunits</note>
    </ligand>
</feature>
<feature type="binding site" description="in other chain" evidence="1">
    <location>
        <begin position="245"/>
        <end position="246"/>
    </location>
    <ligand>
        <name>ATP</name>
        <dbReference type="ChEBI" id="CHEBI:30616"/>
        <note>ligand shared between two neighboring subunits</note>
    </ligand>
</feature>
<feature type="binding site" evidence="1">
    <location>
        <position position="254"/>
    </location>
    <ligand>
        <name>ATP</name>
        <dbReference type="ChEBI" id="CHEBI:30616"/>
        <note>ligand shared between two neighboring subunits</note>
    </ligand>
</feature>
<feature type="binding site" evidence="1">
    <location>
        <position position="254"/>
    </location>
    <ligand>
        <name>L-methionine</name>
        <dbReference type="ChEBI" id="CHEBI:57844"/>
        <note>ligand shared between two neighboring subunits</note>
    </ligand>
</feature>
<feature type="binding site" description="in other chain" evidence="1">
    <location>
        <begin position="260"/>
        <end position="261"/>
    </location>
    <ligand>
        <name>ATP</name>
        <dbReference type="ChEBI" id="CHEBI:30616"/>
        <note>ligand shared between two neighboring subunits</note>
    </ligand>
</feature>
<feature type="binding site" evidence="1">
    <location>
        <position position="277"/>
    </location>
    <ligand>
        <name>ATP</name>
        <dbReference type="ChEBI" id="CHEBI:30616"/>
        <note>ligand shared between two neighboring subunits</note>
    </ligand>
</feature>
<feature type="binding site" evidence="1">
    <location>
        <position position="281"/>
    </location>
    <ligand>
        <name>ATP</name>
        <dbReference type="ChEBI" id="CHEBI:30616"/>
        <note>ligand shared between two neighboring subunits</note>
    </ligand>
</feature>
<feature type="binding site" description="in other chain" evidence="1">
    <location>
        <position position="285"/>
    </location>
    <ligand>
        <name>L-methionine</name>
        <dbReference type="ChEBI" id="CHEBI:57844"/>
        <note>ligand shared between two neighboring subunits</note>
    </ligand>
</feature>
<comment type="function">
    <text evidence="1">Catalyzes the formation of S-adenosylmethionine (AdoMet) from methionine and ATP. The overall synthetic reaction is composed of two sequential steps, AdoMet formation and the subsequent tripolyphosphate hydrolysis which occurs prior to release of AdoMet from the enzyme.</text>
</comment>
<comment type="catalytic activity">
    <reaction evidence="1">
        <text>L-methionine + ATP + H2O = S-adenosyl-L-methionine + phosphate + diphosphate</text>
        <dbReference type="Rhea" id="RHEA:21080"/>
        <dbReference type="ChEBI" id="CHEBI:15377"/>
        <dbReference type="ChEBI" id="CHEBI:30616"/>
        <dbReference type="ChEBI" id="CHEBI:33019"/>
        <dbReference type="ChEBI" id="CHEBI:43474"/>
        <dbReference type="ChEBI" id="CHEBI:57844"/>
        <dbReference type="ChEBI" id="CHEBI:59789"/>
        <dbReference type="EC" id="2.5.1.6"/>
    </reaction>
</comment>
<comment type="cofactor">
    <cofactor evidence="1">
        <name>Mg(2+)</name>
        <dbReference type="ChEBI" id="CHEBI:18420"/>
    </cofactor>
    <text evidence="1">Binds 2 divalent ions per subunit.</text>
</comment>
<comment type="cofactor">
    <cofactor evidence="1">
        <name>K(+)</name>
        <dbReference type="ChEBI" id="CHEBI:29103"/>
    </cofactor>
    <text evidence="1">Binds 1 potassium ion per subunit.</text>
</comment>
<comment type="pathway">
    <text evidence="1">Amino-acid biosynthesis; S-adenosyl-L-methionine biosynthesis; S-adenosyl-L-methionine from L-methionine: step 1/1.</text>
</comment>
<comment type="subunit">
    <text evidence="1">Homotetramer; dimer of dimers.</text>
</comment>
<comment type="subcellular location">
    <subcellularLocation>
        <location evidence="1">Cytoplasm</location>
    </subcellularLocation>
</comment>
<comment type="similarity">
    <text evidence="1">Belongs to the AdoMet synthase family.</text>
</comment>
<gene>
    <name evidence="1" type="primary">metK</name>
    <name type="ordered locus">Cpha266_0922</name>
</gene>
<sequence length="404" mass="44081">MSQSRYFFTSESVSEGHPDKVSDQISDAVLDEFIRQDPDSRVACETFVTTGQVIVGGEVTTKGVVDVQTIARKVITEIGYTKGEYMFDAHSCGVLSALHSQSPDINRGVDRKEEISDELDRVGAGDQGMMFGYACTETPELMPAALQFAQQLVKKLAEIRKEGKIMTYLRPDAKSQVTLEYVDEQVKRVDAVVVSTQHDPEPEGVSEAEWQAVIKKDIIENVINVVIPAALLDEKTKLHINPTGRFVIGGPHGDTGLTGRKIIVDTYGGAAPHGGGAFSGKDPSKVDRSAAYASRHVAKNIVAAGLADKCTVQVSYAIGVAQPVSIYINTHGTAKHGLTDAEIQEKAEVIFDLRPASIIKRFGLNKPEGWCYQETAAYGHFGRENFPWERTEKVEELKKALNVA</sequence>